<proteinExistence type="inferred from homology"/>
<comment type="function">
    <text evidence="1">Involved in peptide bond synthesis. Stimulates efficient translation and peptide-bond synthesis on native or reconstituted 70S ribosomes in vitro. Probably functions indirectly by altering the affinity of the ribosome for aminoacyl-tRNA, thus increasing their reactivity as acceptors for peptidyl transferase.</text>
</comment>
<comment type="pathway">
    <text evidence="1">Protein biosynthesis; polypeptide chain elongation.</text>
</comment>
<comment type="subcellular location">
    <subcellularLocation>
        <location evidence="1">Cytoplasm</location>
    </subcellularLocation>
</comment>
<comment type="similarity">
    <text evidence="1">Belongs to the elongation factor P family.</text>
</comment>
<reference key="1">
    <citation type="journal article" date="2008" name="DNA Res.">
        <title>Comparative genome analysis of Lactobacillus reuteri and Lactobacillus fermentum reveal a genomic island for reuterin and cobalamin production.</title>
        <authorList>
            <person name="Morita H."/>
            <person name="Toh H."/>
            <person name="Fukuda S."/>
            <person name="Horikawa H."/>
            <person name="Oshima K."/>
            <person name="Suzuki T."/>
            <person name="Murakami M."/>
            <person name="Hisamatsu S."/>
            <person name="Kato Y."/>
            <person name="Takizawa T."/>
            <person name="Fukuoka H."/>
            <person name="Yoshimura T."/>
            <person name="Itoh K."/>
            <person name="O'Sullivan D.J."/>
            <person name="McKay L.L."/>
            <person name="Ohno H."/>
            <person name="Kikuchi J."/>
            <person name="Masaoka T."/>
            <person name="Hattori M."/>
        </authorList>
    </citation>
    <scope>NUCLEOTIDE SEQUENCE [LARGE SCALE GENOMIC DNA]</scope>
    <source>
        <strain>NBRC 3956 / LMG 18251</strain>
    </source>
</reference>
<dbReference type="EMBL" id="AP008937">
    <property type="protein sequence ID" value="BAG28152.1"/>
    <property type="molecule type" value="Genomic_DNA"/>
</dbReference>
<dbReference type="RefSeq" id="WP_003682249.1">
    <property type="nucleotide sequence ID" value="NC_010610.1"/>
</dbReference>
<dbReference type="SMR" id="B2GES0"/>
<dbReference type="GeneID" id="83715740"/>
<dbReference type="KEGG" id="lfe:LAF_1816"/>
<dbReference type="eggNOG" id="COG0231">
    <property type="taxonomic scope" value="Bacteria"/>
</dbReference>
<dbReference type="HOGENOM" id="CLU_074944_3_0_9"/>
<dbReference type="UniPathway" id="UPA00345"/>
<dbReference type="Proteomes" id="UP000001697">
    <property type="component" value="Chromosome"/>
</dbReference>
<dbReference type="GO" id="GO:0005737">
    <property type="term" value="C:cytoplasm"/>
    <property type="evidence" value="ECO:0007669"/>
    <property type="project" value="UniProtKB-SubCell"/>
</dbReference>
<dbReference type="GO" id="GO:0003746">
    <property type="term" value="F:translation elongation factor activity"/>
    <property type="evidence" value="ECO:0007669"/>
    <property type="project" value="UniProtKB-UniRule"/>
</dbReference>
<dbReference type="GO" id="GO:0043043">
    <property type="term" value="P:peptide biosynthetic process"/>
    <property type="evidence" value="ECO:0007669"/>
    <property type="project" value="InterPro"/>
</dbReference>
<dbReference type="CDD" id="cd04470">
    <property type="entry name" value="S1_EF-P_repeat_1"/>
    <property type="match status" value="1"/>
</dbReference>
<dbReference type="FunFam" id="2.30.30.30:FF:000003">
    <property type="entry name" value="Elongation factor P"/>
    <property type="match status" value="1"/>
</dbReference>
<dbReference type="FunFam" id="2.40.50.140:FF:000004">
    <property type="entry name" value="Elongation factor P"/>
    <property type="match status" value="1"/>
</dbReference>
<dbReference type="FunFam" id="2.40.50.140:FF:000009">
    <property type="entry name" value="Elongation factor P"/>
    <property type="match status" value="1"/>
</dbReference>
<dbReference type="Gene3D" id="2.30.30.30">
    <property type="match status" value="1"/>
</dbReference>
<dbReference type="Gene3D" id="2.40.50.140">
    <property type="entry name" value="Nucleic acid-binding proteins"/>
    <property type="match status" value="2"/>
</dbReference>
<dbReference type="HAMAP" id="MF_00141">
    <property type="entry name" value="EF_P"/>
    <property type="match status" value="1"/>
</dbReference>
<dbReference type="InterPro" id="IPR015365">
    <property type="entry name" value="Elong-fact-P_C"/>
</dbReference>
<dbReference type="InterPro" id="IPR012340">
    <property type="entry name" value="NA-bd_OB-fold"/>
</dbReference>
<dbReference type="InterPro" id="IPR014722">
    <property type="entry name" value="Rib_uL2_dom2"/>
</dbReference>
<dbReference type="InterPro" id="IPR020599">
    <property type="entry name" value="Transl_elong_fac_P/YeiP"/>
</dbReference>
<dbReference type="InterPro" id="IPR013185">
    <property type="entry name" value="Transl_elong_KOW-like"/>
</dbReference>
<dbReference type="InterPro" id="IPR001059">
    <property type="entry name" value="Transl_elong_P/YeiP_cen"/>
</dbReference>
<dbReference type="InterPro" id="IPR013852">
    <property type="entry name" value="Transl_elong_P/YeiP_CS"/>
</dbReference>
<dbReference type="InterPro" id="IPR011768">
    <property type="entry name" value="Transl_elongation_fac_P"/>
</dbReference>
<dbReference type="InterPro" id="IPR008991">
    <property type="entry name" value="Translation_prot_SH3-like_sf"/>
</dbReference>
<dbReference type="NCBIfam" id="TIGR00038">
    <property type="entry name" value="efp"/>
    <property type="match status" value="1"/>
</dbReference>
<dbReference type="NCBIfam" id="NF001810">
    <property type="entry name" value="PRK00529.1"/>
    <property type="match status" value="1"/>
</dbReference>
<dbReference type="PANTHER" id="PTHR30053">
    <property type="entry name" value="ELONGATION FACTOR P"/>
    <property type="match status" value="1"/>
</dbReference>
<dbReference type="PANTHER" id="PTHR30053:SF12">
    <property type="entry name" value="ELONGATION FACTOR P (EF-P) FAMILY PROTEIN"/>
    <property type="match status" value="1"/>
</dbReference>
<dbReference type="Pfam" id="PF01132">
    <property type="entry name" value="EFP"/>
    <property type="match status" value="1"/>
</dbReference>
<dbReference type="Pfam" id="PF08207">
    <property type="entry name" value="EFP_N"/>
    <property type="match status" value="1"/>
</dbReference>
<dbReference type="Pfam" id="PF09285">
    <property type="entry name" value="Elong-fact-P_C"/>
    <property type="match status" value="1"/>
</dbReference>
<dbReference type="PIRSF" id="PIRSF005901">
    <property type="entry name" value="EF-P"/>
    <property type="match status" value="1"/>
</dbReference>
<dbReference type="SMART" id="SM01185">
    <property type="entry name" value="EFP"/>
    <property type="match status" value="1"/>
</dbReference>
<dbReference type="SMART" id="SM00841">
    <property type="entry name" value="Elong-fact-P_C"/>
    <property type="match status" value="1"/>
</dbReference>
<dbReference type="SUPFAM" id="SSF50249">
    <property type="entry name" value="Nucleic acid-binding proteins"/>
    <property type="match status" value="2"/>
</dbReference>
<dbReference type="SUPFAM" id="SSF50104">
    <property type="entry name" value="Translation proteins SH3-like domain"/>
    <property type="match status" value="1"/>
</dbReference>
<dbReference type="PROSITE" id="PS01275">
    <property type="entry name" value="EFP"/>
    <property type="match status" value="1"/>
</dbReference>
<keyword id="KW-0963">Cytoplasm</keyword>
<keyword id="KW-0251">Elongation factor</keyword>
<keyword id="KW-0648">Protein biosynthesis</keyword>
<keyword id="KW-1185">Reference proteome</keyword>
<evidence type="ECO:0000255" key="1">
    <source>
        <dbReference type="HAMAP-Rule" id="MF_00141"/>
    </source>
</evidence>
<organism>
    <name type="scientific">Limosilactobacillus fermentum (strain NBRC 3956 / LMG 18251)</name>
    <name type="common">Lactobacillus fermentum</name>
    <dbReference type="NCBI Taxonomy" id="334390"/>
    <lineage>
        <taxon>Bacteria</taxon>
        <taxon>Bacillati</taxon>
        <taxon>Bacillota</taxon>
        <taxon>Bacilli</taxon>
        <taxon>Lactobacillales</taxon>
        <taxon>Lactobacillaceae</taxon>
        <taxon>Limosilactobacillus</taxon>
    </lineage>
</organism>
<feature type="chain" id="PRO_1000096167" description="Elongation factor P">
    <location>
        <begin position="1"/>
        <end position="185"/>
    </location>
</feature>
<protein>
    <recommendedName>
        <fullName evidence="1">Elongation factor P</fullName>
        <shortName evidence="1">EF-P</shortName>
    </recommendedName>
</protein>
<sequence>MIQTIDLKKGMVFEKDGKLLKVLAINHHKPGKGNTLMQMDIQDVRSGSIVHTTMRPSEKVEQVMVNKKNAQYLYDEGNTSVFMDLETYEQYEIDQSQISEEKKYLTENMQVQMNFVDSELVGVELPATVTLEVVETQPEIKGATIDGGGKPATMNTGLVVTVPSFVKNGDKIIVNTSDGAYKSRA</sequence>
<accession>B2GES0</accession>
<gene>
    <name evidence="1" type="primary">efp</name>
    <name type="ordered locus">LAF_1816</name>
</gene>
<name>EFP_LIMF3</name>